<keyword id="KW-1003">Cell membrane</keyword>
<keyword id="KW-0145">Chemotaxis</keyword>
<keyword id="KW-0968">Cytoplasmic vesicle</keyword>
<keyword id="KW-1015">Disulfide bond</keyword>
<keyword id="KW-0297">G-protein coupled receptor</keyword>
<keyword id="KW-0325">Glycoprotein</keyword>
<keyword id="KW-0472">Membrane</keyword>
<keyword id="KW-0597">Phosphoprotein</keyword>
<keyword id="KW-0675">Receptor</keyword>
<keyword id="KW-1185">Reference proteome</keyword>
<keyword id="KW-0765">Sulfation</keyword>
<keyword id="KW-0807">Transducer</keyword>
<keyword id="KW-0812">Transmembrane</keyword>
<keyword id="KW-1133">Transmembrane helix</keyword>
<comment type="function">
    <text evidence="1 4">Receptor for the chemotactic and inflammatory peptide anaphylatoxin C5a (PubMed:10510441). The ligand interacts with at least two sites on the receptor: a high-affinity site on the extracellular N-terminus, and a second site in the transmembrane region which activates downstream signaling events. Receptor activation stimulates chemotaxis, granule enzyme release, intracellular calcium release and superoxide anion production (By similarity).</text>
</comment>
<comment type="subunit">
    <text evidence="1">Homodimer. May also form higher-order oligomers. Interacts (when phosphorylated) with ARRB1 and ARRB2; the interaction is associated with internalization of C5aR.</text>
</comment>
<comment type="subcellular location">
    <subcellularLocation>
        <location evidence="4">Cell membrane</location>
        <topology evidence="1">Multi-pass membrane protein</topology>
    </subcellularLocation>
    <subcellularLocation>
        <location evidence="1">Cytoplasmic vesicle</location>
    </subcellularLocation>
    <text evidence="1">Phosphorylated C5aR colocalizes with ARRB1 and ARRB2 in cytoplasmic vesicles.</text>
</comment>
<comment type="PTM">
    <text evidence="1">Sulfation plays a critical role in the association of C5aR with C5a, but no significant role in the ability of the receptor to transduce a signal and mobilize calcium in response to a small peptide agonist.</text>
</comment>
<comment type="PTM">
    <text evidence="1">Phosphorylated on serine residues in response to C5a binding, resulting in internalization of the receptor and short-term desensitization to C5a.</text>
</comment>
<comment type="similarity">
    <text evidence="3">Belongs to the G-protein coupled receptor 1 family.</text>
</comment>
<organism>
    <name type="scientific">Oryctolagus cuniculus</name>
    <name type="common">Rabbit</name>
    <dbReference type="NCBI Taxonomy" id="9986"/>
    <lineage>
        <taxon>Eukaryota</taxon>
        <taxon>Metazoa</taxon>
        <taxon>Chordata</taxon>
        <taxon>Craniata</taxon>
        <taxon>Vertebrata</taxon>
        <taxon>Euteleostomi</taxon>
        <taxon>Mammalia</taxon>
        <taxon>Eutheria</taxon>
        <taxon>Euarchontoglires</taxon>
        <taxon>Glires</taxon>
        <taxon>Lagomorpha</taxon>
        <taxon>Leporidae</taxon>
        <taxon>Oryctolagus</taxon>
    </lineage>
</organism>
<dbReference type="EMBL" id="AF068680">
    <property type="protein sequence ID" value="AAF13030.1"/>
    <property type="molecule type" value="Genomic_DNA"/>
</dbReference>
<dbReference type="SMR" id="Q9TUE1"/>
<dbReference type="FunCoup" id="Q9TUE1">
    <property type="interactions" value="134"/>
</dbReference>
<dbReference type="STRING" id="9986.ENSOCUP00000023879"/>
<dbReference type="GlyCosmos" id="Q9TUE1">
    <property type="glycosylation" value="1 site, No reported glycans"/>
</dbReference>
<dbReference type="PaxDb" id="9986-ENSOCUP00000023879"/>
<dbReference type="eggNOG" id="ENOG502R35Z">
    <property type="taxonomic scope" value="Eukaryota"/>
</dbReference>
<dbReference type="InParanoid" id="Q9TUE1"/>
<dbReference type="Proteomes" id="UP000001811">
    <property type="component" value="Unplaced"/>
</dbReference>
<dbReference type="GO" id="GO:0045177">
    <property type="term" value="C:apical part of cell"/>
    <property type="evidence" value="ECO:0000250"/>
    <property type="project" value="UniProtKB"/>
</dbReference>
<dbReference type="GO" id="GO:0016323">
    <property type="term" value="C:basolateral plasma membrane"/>
    <property type="evidence" value="ECO:0000250"/>
    <property type="project" value="UniProtKB"/>
</dbReference>
<dbReference type="GO" id="GO:0031410">
    <property type="term" value="C:cytoplasmic vesicle"/>
    <property type="evidence" value="ECO:0007669"/>
    <property type="project" value="UniProtKB-KW"/>
</dbReference>
<dbReference type="GO" id="GO:0004878">
    <property type="term" value="F:complement component C5a receptor activity"/>
    <property type="evidence" value="ECO:0000250"/>
    <property type="project" value="UniProtKB"/>
</dbReference>
<dbReference type="GO" id="GO:0004930">
    <property type="term" value="F:G protein-coupled receptor activity"/>
    <property type="evidence" value="ECO:0007669"/>
    <property type="project" value="UniProtKB-KW"/>
</dbReference>
<dbReference type="GO" id="GO:0006935">
    <property type="term" value="P:chemotaxis"/>
    <property type="evidence" value="ECO:0007669"/>
    <property type="project" value="UniProtKB-KW"/>
</dbReference>
<dbReference type="GO" id="GO:0006954">
    <property type="term" value="P:inflammatory response"/>
    <property type="evidence" value="ECO:0007669"/>
    <property type="project" value="TreeGrafter"/>
</dbReference>
<dbReference type="GO" id="GO:0042789">
    <property type="term" value="P:mRNA transcription by RNA polymerase II"/>
    <property type="evidence" value="ECO:0000250"/>
    <property type="project" value="UniProtKB"/>
</dbReference>
<dbReference type="GO" id="GO:0007200">
    <property type="term" value="P:phospholipase C-activating G protein-coupled receptor signaling pathway"/>
    <property type="evidence" value="ECO:0007669"/>
    <property type="project" value="TreeGrafter"/>
</dbReference>
<dbReference type="GO" id="GO:0007204">
    <property type="term" value="P:positive regulation of cytosolic calcium ion concentration"/>
    <property type="evidence" value="ECO:0007669"/>
    <property type="project" value="TreeGrafter"/>
</dbReference>
<dbReference type="GO" id="GO:0050679">
    <property type="term" value="P:positive regulation of epithelial cell proliferation"/>
    <property type="evidence" value="ECO:0000250"/>
    <property type="project" value="UniProtKB"/>
</dbReference>
<dbReference type="GO" id="GO:0070374">
    <property type="term" value="P:positive regulation of ERK1 and ERK2 cascade"/>
    <property type="evidence" value="ECO:0000250"/>
    <property type="project" value="UniProtKB"/>
</dbReference>
<dbReference type="FunFam" id="1.20.1070.10:FF:000034">
    <property type="entry name" value="G-protein coupled receptor 1"/>
    <property type="match status" value="1"/>
</dbReference>
<dbReference type="Gene3D" id="1.20.1070.10">
    <property type="entry name" value="Rhodopsin 7-helix transmembrane proteins"/>
    <property type="match status" value="1"/>
</dbReference>
<dbReference type="InterPro" id="IPR002234">
    <property type="entry name" value="Anphylx_rcpt_C3a/C5a1-2"/>
</dbReference>
<dbReference type="InterPro" id="IPR000826">
    <property type="entry name" value="Formyl_rcpt-rel"/>
</dbReference>
<dbReference type="InterPro" id="IPR000276">
    <property type="entry name" value="GPCR_Rhodpsn"/>
</dbReference>
<dbReference type="InterPro" id="IPR017452">
    <property type="entry name" value="GPCR_Rhodpsn_7TM"/>
</dbReference>
<dbReference type="PANTHER" id="PTHR24225:SF29">
    <property type="entry name" value="C5A ANAPHYLATOXIN CHEMOTACTIC RECEPTOR 1"/>
    <property type="match status" value="1"/>
</dbReference>
<dbReference type="PANTHER" id="PTHR24225">
    <property type="entry name" value="CHEMOTACTIC RECEPTOR"/>
    <property type="match status" value="1"/>
</dbReference>
<dbReference type="Pfam" id="PF00001">
    <property type="entry name" value="7tm_1"/>
    <property type="match status" value="1"/>
</dbReference>
<dbReference type="PRINTS" id="PR01104">
    <property type="entry name" value="ANPHYLATOXNR"/>
</dbReference>
<dbReference type="PRINTS" id="PR00426">
    <property type="entry name" value="C5ANPHYLTXNR"/>
</dbReference>
<dbReference type="PRINTS" id="PR00237">
    <property type="entry name" value="GPCRRHODOPSN"/>
</dbReference>
<dbReference type="SUPFAM" id="SSF81321">
    <property type="entry name" value="Family A G protein-coupled receptor-like"/>
    <property type="match status" value="1"/>
</dbReference>
<dbReference type="PROSITE" id="PS00237">
    <property type="entry name" value="G_PROTEIN_RECEP_F1_1"/>
    <property type="match status" value="1"/>
</dbReference>
<dbReference type="PROSITE" id="PS50262">
    <property type="entry name" value="G_PROTEIN_RECEP_F1_2"/>
    <property type="match status" value="1"/>
</dbReference>
<sequence length="350" mass="38586">APMENSTYDYTNYDSLGTLDPSTPVDNTVRRLRPTTIVALVIYMAVFLVGVPGNALVVWVTALEAKRTVNAIWFLNLAVADLLSCLALPILFVSIIQEGHWPFGRAACSVLPSLILLNMYASILLLATISADRFLLVFNPIWCQNTRGAGLAWLACCVAWGLALLLTIPSFLYRKVLQDDYPPKTTCGVDYGHEGVRAERAVAIVRLVVGFLLPLFTLSVCYTFLLLRTWSRNGTRSTKTLKVVVAVVVSFFIFWLPYQVMGMILALLHPSSATFRWAIRLDPLCIALAYVNCCINPIIYVVAGKGFQGQLRKSLPSLLRNVLAEESVIQGSKSFSRSTVDTVADKCQAV</sequence>
<reference key="1">
    <citation type="journal article" date="1999" name="Br. J. Pharmacol.">
        <title>Cloning and preliminary pharmacological characterization of the anaphylatoxin C5a receptor in the rabbit.</title>
        <authorList>
            <person name="Bachvarov D.R."/>
            <person name="Houle S."/>
            <person name="Bachvarova M."/>
            <person name="Bouthillier J."/>
            <person name="St Pierre S.A."/>
            <person name="Fukuoka Y."/>
            <person name="Ember J.A."/>
            <person name="Marceau F."/>
        </authorList>
    </citation>
    <scope>NUCLEOTIDE SEQUENCE [GENOMIC DNA]</scope>
    <scope>FUNCTION</scope>
    <scope>SUBCELLULAR LOCATION</scope>
    <source>
        <strain>New Zealand white</strain>
    </source>
</reference>
<gene>
    <name type="primary">C5AR1</name>
    <name type="synonym">C5R1</name>
</gene>
<feature type="chain" id="PRO_0000069214" description="C5a anaphylatoxin chemotactic receptor 1">
    <location>
        <begin position="1" status="less than"/>
        <end position="350"/>
    </location>
</feature>
<feature type="topological domain" description="Extracellular" evidence="5">
    <location>
        <begin position="1" status="less than"/>
        <end position="36"/>
    </location>
</feature>
<feature type="transmembrane region" description="Helical; Name=1" evidence="1">
    <location>
        <begin position="37"/>
        <end position="63"/>
    </location>
</feature>
<feature type="topological domain" description="Cytoplasmic" evidence="5">
    <location>
        <begin position="64"/>
        <end position="68"/>
    </location>
</feature>
<feature type="transmembrane region" description="Helical; Name=2" evidence="1">
    <location>
        <begin position="69"/>
        <end position="92"/>
    </location>
</feature>
<feature type="topological domain" description="Extracellular" evidence="5">
    <location>
        <begin position="93"/>
        <end position="109"/>
    </location>
</feature>
<feature type="transmembrane region" description="Helical; Name=3" evidence="1">
    <location>
        <begin position="110"/>
        <end position="131"/>
    </location>
</feature>
<feature type="topological domain" description="Cytoplasmic" evidence="5">
    <location>
        <begin position="132"/>
        <end position="152"/>
    </location>
</feature>
<feature type="transmembrane region" description="Helical; Name=4" evidence="1">
    <location>
        <begin position="153"/>
        <end position="173"/>
    </location>
</feature>
<feature type="topological domain" description="Extracellular" evidence="5">
    <location>
        <begin position="174"/>
        <end position="200"/>
    </location>
</feature>
<feature type="transmembrane region" description="Helical; Name=5" evidence="1">
    <location>
        <begin position="201"/>
        <end position="226"/>
    </location>
</feature>
<feature type="topological domain" description="Cytoplasmic" evidence="5">
    <location>
        <begin position="227"/>
        <end position="242"/>
    </location>
</feature>
<feature type="transmembrane region" description="Helical; Name=6" evidence="1">
    <location>
        <begin position="243"/>
        <end position="265"/>
    </location>
</feature>
<feature type="topological domain" description="Extracellular" evidence="5">
    <location>
        <begin position="266"/>
        <end position="282"/>
    </location>
</feature>
<feature type="transmembrane region" description="Helical; Name=7" evidence="1">
    <location>
        <begin position="283"/>
        <end position="303"/>
    </location>
</feature>
<feature type="topological domain" description="Cytoplasmic" evidence="5">
    <location>
        <begin position="304"/>
        <end position="350"/>
    </location>
</feature>
<feature type="modified residue" description="Sulfotyrosine" evidence="1">
    <location>
        <position position="10"/>
    </location>
</feature>
<feature type="modified residue" description="Sulfotyrosine" evidence="1">
    <location>
        <position position="13"/>
    </location>
</feature>
<feature type="modified residue" description="Phosphoserine" evidence="1">
    <location>
        <position position="314"/>
    </location>
</feature>
<feature type="modified residue" description="Phosphoserine" evidence="1">
    <location>
        <position position="317"/>
    </location>
</feature>
<feature type="modified residue" description="Phosphoserine" evidence="1">
    <location>
        <position position="327"/>
    </location>
</feature>
<feature type="modified residue" description="Phosphoserine" evidence="1">
    <location>
        <position position="332"/>
    </location>
</feature>
<feature type="modified residue" description="Phosphoserine" evidence="1">
    <location>
        <position position="334"/>
    </location>
</feature>
<feature type="modified residue" description="Phosphoserine" evidence="1">
    <location>
        <position position="338"/>
    </location>
</feature>
<feature type="glycosylation site" description="N-linked (GlcNAc...) asparagine" evidence="2">
    <location>
        <position position="5"/>
    </location>
</feature>
<feature type="disulfide bond" evidence="3">
    <location>
        <begin position="108"/>
        <end position="187"/>
    </location>
</feature>
<feature type="non-terminal residue">
    <location>
        <position position="1"/>
    </location>
</feature>
<protein>
    <recommendedName>
        <fullName>C5a anaphylatoxin chemotactic receptor 1</fullName>
    </recommendedName>
    <alternativeName>
        <fullName>C5a anaphylatoxin chemotactic receptor</fullName>
        <shortName>C5a-R</shortName>
        <shortName>C5aR</shortName>
    </alternativeName>
    <cdAntigenName>CD88</cdAntigenName>
</protein>
<evidence type="ECO:0000250" key="1">
    <source>
        <dbReference type="UniProtKB" id="P21730"/>
    </source>
</evidence>
<evidence type="ECO:0000255" key="2"/>
<evidence type="ECO:0000255" key="3">
    <source>
        <dbReference type="PROSITE-ProRule" id="PRU00521"/>
    </source>
</evidence>
<evidence type="ECO:0000269" key="4">
    <source>
    </source>
</evidence>
<evidence type="ECO:0000305" key="5"/>
<proteinExistence type="inferred from homology"/>
<name>C5AR1_RABIT</name>
<accession>Q9TUE1</accession>